<protein>
    <recommendedName>
        <fullName evidence="1">Serine--tRNA ligase</fullName>
        <ecNumber evidence="1">6.1.1.11</ecNumber>
    </recommendedName>
    <alternativeName>
        <fullName evidence="1">Seryl-tRNA synthetase</fullName>
        <shortName evidence="1">SerRS</shortName>
    </alternativeName>
    <alternativeName>
        <fullName evidence="1">Seryl-tRNA(Ser/Sec) synthetase</fullName>
    </alternativeName>
</protein>
<keyword id="KW-0030">Aminoacyl-tRNA synthetase</keyword>
<keyword id="KW-0067">ATP-binding</keyword>
<keyword id="KW-0963">Cytoplasm</keyword>
<keyword id="KW-0436">Ligase</keyword>
<keyword id="KW-0547">Nucleotide-binding</keyword>
<keyword id="KW-0648">Protein biosynthesis</keyword>
<dbReference type="EC" id="6.1.1.11" evidence="1"/>
<dbReference type="EMBL" id="CP000766">
    <property type="protein sequence ID" value="ABY73156.1"/>
    <property type="molecule type" value="Genomic_DNA"/>
</dbReference>
<dbReference type="RefSeq" id="WP_012151326.1">
    <property type="nucleotide sequence ID" value="NC_010263.3"/>
</dbReference>
<dbReference type="SMR" id="B0BV96"/>
<dbReference type="GeneID" id="79937828"/>
<dbReference type="KEGG" id="rrj:RrIowa_1425"/>
<dbReference type="eggNOG" id="COG0172">
    <property type="taxonomic scope" value="Bacteria"/>
</dbReference>
<dbReference type="HOGENOM" id="CLU_023797_1_1_5"/>
<dbReference type="UniPathway" id="UPA00906">
    <property type="reaction ID" value="UER00895"/>
</dbReference>
<dbReference type="Proteomes" id="UP000000796">
    <property type="component" value="Chromosome"/>
</dbReference>
<dbReference type="GO" id="GO:0005737">
    <property type="term" value="C:cytoplasm"/>
    <property type="evidence" value="ECO:0007669"/>
    <property type="project" value="UniProtKB-SubCell"/>
</dbReference>
<dbReference type="GO" id="GO:0005524">
    <property type="term" value="F:ATP binding"/>
    <property type="evidence" value="ECO:0007669"/>
    <property type="project" value="UniProtKB-UniRule"/>
</dbReference>
<dbReference type="GO" id="GO:0004828">
    <property type="term" value="F:serine-tRNA ligase activity"/>
    <property type="evidence" value="ECO:0007669"/>
    <property type="project" value="UniProtKB-UniRule"/>
</dbReference>
<dbReference type="GO" id="GO:0016260">
    <property type="term" value="P:selenocysteine biosynthetic process"/>
    <property type="evidence" value="ECO:0007669"/>
    <property type="project" value="UniProtKB-UniRule"/>
</dbReference>
<dbReference type="GO" id="GO:0006434">
    <property type="term" value="P:seryl-tRNA aminoacylation"/>
    <property type="evidence" value="ECO:0007669"/>
    <property type="project" value="UniProtKB-UniRule"/>
</dbReference>
<dbReference type="CDD" id="cd00770">
    <property type="entry name" value="SerRS_core"/>
    <property type="match status" value="1"/>
</dbReference>
<dbReference type="Gene3D" id="3.30.930.10">
    <property type="entry name" value="Bira Bifunctional Protein, Domain 2"/>
    <property type="match status" value="1"/>
</dbReference>
<dbReference type="Gene3D" id="1.10.287.40">
    <property type="entry name" value="Serine-tRNA synthetase, tRNA binding domain"/>
    <property type="match status" value="1"/>
</dbReference>
<dbReference type="HAMAP" id="MF_00176">
    <property type="entry name" value="Ser_tRNA_synth_type1"/>
    <property type="match status" value="1"/>
</dbReference>
<dbReference type="InterPro" id="IPR002314">
    <property type="entry name" value="aa-tRNA-synt_IIb"/>
</dbReference>
<dbReference type="InterPro" id="IPR006195">
    <property type="entry name" value="aa-tRNA-synth_II"/>
</dbReference>
<dbReference type="InterPro" id="IPR045864">
    <property type="entry name" value="aa-tRNA-synth_II/BPL/LPL"/>
</dbReference>
<dbReference type="InterPro" id="IPR002317">
    <property type="entry name" value="Ser-tRNA-ligase_type_1"/>
</dbReference>
<dbReference type="InterPro" id="IPR015866">
    <property type="entry name" value="Ser-tRNA-synth_1_N"/>
</dbReference>
<dbReference type="InterPro" id="IPR042103">
    <property type="entry name" value="SerRS_1_N_sf"/>
</dbReference>
<dbReference type="InterPro" id="IPR033729">
    <property type="entry name" value="SerRS_core"/>
</dbReference>
<dbReference type="InterPro" id="IPR010978">
    <property type="entry name" value="tRNA-bd_arm"/>
</dbReference>
<dbReference type="NCBIfam" id="TIGR00414">
    <property type="entry name" value="serS"/>
    <property type="match status" value="1"/>
</dbReference>
<dbReference type="PANTHER" id="PTHR43697:SF1">
    <property type="entry name" value="SERINE--TRNA LIGASE"/>
    <property type="match status" value="1"/>
</dbReference>
<dbReference type="PANTHER" id="PTHR43697">
    <property type="entry name" value="SERYL-TRNA SYNTHETASE"/>
    <property type="match status" value="1"/>
</dbReference>
<dbReference type="Pfam" id="PF02403">
    <property type="entry name" value="Seryl_tRNA_N"/>
    <property type="match status" value="1"/>
</dbReference>
<dbReference type="Pfam" id="PF00587">
    <property type="entry name" value="tRNA-synt_2b"/>
    <property type="match status" value="1"/>
</dbReference>
<dbReference type="PIRSF" id="PIRSF001529">
    <property type="entry name" value="Ser-tRNA-synth_IIa"/>
    <property type="match status" value="1"/>
</dbReference>
<dbReference type="PRINTS" id="PR00981">
    <property type="entry name" value="TRNASYNTHSER"/>
</dbReference>
<dbReference type="SUPFAM" id="SSF55681">
    <property type="entry name" value="Class II aaRS and biotin synthetases"/>
    <property type="match status" value="1"/>
</dbReference>
<dbReference type="SUPFAM" id="SSF46589">
    <property type="entry name" value="tRNA-binding arm"/>
    <property type="match status" value="1"/>
</dbReference>
<dbReference type="PROSITE" id="PS50862">
    <property type="entry name" value="AA_TRNA_LIGASE_II"/>
    <property type="match status" value="1"/>
</dbReference>
<feature type="chain" id="PRO_1000077209" description="Serine--tRNA ligase">
    <location>
        <begin position="1"/>
        <end position="425"/>
    </location>
</feature>
<feature type="binding site" evidence="1">
    <location>
        <begin position="228"/>
        <end position="230"/>
    </location>
    <ligand>
        <name>L-serine</name>
        <dbReference type="ChEBI" id="CHEBI:33384"/>
    </ligand>
</feature>
<feature type="binding site" evidence="1">
    <location>
        <begin position="259"/>
        <end position="261"/>
    </location>
    <ligand>
        <name>ATP</name>
        <dbReference type="ChEBI" id="CHEBI:30616"/>
    </ligand>
</feature>
<feature type="binding site" evidence="1">
    <location>
        <position position="282"/>
    </location>
    <ligand>
        <name>L-serine</name>
        <dbReference type="ChEBI" id="CHEBI:33384"/>
    </ligand>
</feature>
<feature type="binding site" evidence="1">
    <location>
        <begin position="346"/>
        <end position="349"/>
    </location>
    <ligand>
        <name>ATP</name>
        <dbReference type="ChEBI" id="CHEBI:30616"/>
    </ligand>
</feature>
<feature type="binding site" evidence="1">
    <location>
        <position position="382"/>
    </location>
    <ligand>
        <name>L-serine</name>
        <dbReference type="ChEBI" id="CHEBI:33384"/>
    </ligand>
</feature>
<organism>
    <name type="scientific">Rickettsia rickettsii (strain Iowa)</name>
    <dbReference type="NCBI Taxonomy" id="452659"/>
    <lineage>
        <taxon>Bacteria</taxon>
        <taxon>Pseudomonadati</taxon>
        <taxon>Pseudomonadota</taxon>
        <taxon>Alphaproteobacteria</taxon>
        <taxon>Rickettsiales</taxon>
        <taxon>Rickettsiaceae</taxon>
        <taxon>Rickettsieae</taxon>
        <taxon>Rickettsia</taxon>
        <taxon>spotted fever group</taxon>
    </lineage>
</organism>
<proteinExistence type="inferred from homology"/>
<reference key="1">
    <citation type="journal article" date="2008" name="Infect. Immun.">
        <title>Genomic comparison of virulent Rickettsia rickettsii Sheila Smith and avirulent Rickettsia rickettsii Iowa.</title>
        <authorList>
            <person name="Ellison D.W."/>
            <person name="Clark T.R."/>
            <person name="Sturdevant D.E."/>
            <person name="Virtaneva K."/>
            <person name="Porcella S.F."/>
            <person name="Hackstadt T."/>
        </authorList>
    </citation>
    <scope>NUCLEOTIDE SEQUENCE [LARGE SCALE GENOMIC DNA]</scope>
    <source>
        <strain>Iowa</strain>
    </source>
</reference>
<comment type="function">
    <text evidence="1">Catalyzes the attachment of serine to tRNA(Ser). Is also able to aminoacylate tRNA(Sec) with serine, to form the misacylated tRNA L-seryl-tRNA(Sec), which will be further converted into selenocysteinyl-tRNA(Sec).</text>
</comment>
<comment type="catalytic activity">
    <reaction evidence="1">
        <text>tRNA(Ser) + L-serine + ATP = L-seryl-tRNA(Ser) + AMP + diphosphate + H(+)</text>
        <dbReference type="Rhea" id="RHEA:12292"/>
        <dbReference type="Rhea" id="RHEA-COMP:9669"/>
        <dbReference type="Rhea" id="RHEA-COMP:9703"/>
        <dbReference type="ChEBI" id="CHEBI:15378"/>
        <dbReference type="ChEBI" id="CHEBI:30616"/>
        <dbReference type="ChEBI" id="CHEBI:33019"/>
        <dbReference type="ChEBI" id="CHEBI:33384"/>
        <dbReference type="ChEBI" id="CHEBI:78442"/>
        <dbReference type="ChEBI" id="CHEBI:78533"/>
        <dbReference type="ChEBI" id="CHEBI:456215"/>
        <dbReference type="EC" id="6.1.1.11"/>
    </reaction>
</comment>
<comment type="catalytic activity">
    <reaction evidence="1">
        <text>tRNA(Sec) + L-serine + ATP = L-seryl-tRNA(Sec) + AMP + diphosphate + H(+)</text>
        <dbReference type="Rhea" id="RHEA:42580"/>
        <dbReference type="Rhea" id="RHEA-COMP:9742"/>
        <dbReference type="Rhea" id="RHEA-COMP:10128"/>
        <dbReference type="ChEBI" id="CHEBI:15378"/>
        <dbReference type="ChEBI" id="CHEBI:30616"/>
        <dbReference type="ChEBI" id="CHEBI:33019"/>
        <dbReference type="ChEBI" id="CHEBI:33384"/>
        <dbReference type="ChEBI" id="CHEBI:78442"/>
        <dbReference type="ChEBI" id="CHEBI:78533"/>
        <dbReference type="ChEBI" id="CHEBI:456215"/>
        <dbReference type="EC" id="6.1.1.11"/>
    </reaction>
</comment>
<comment type="pathway">
    <text evidence="1">Aminoacyl-tRNA biosynthesis; selenocysteinyl-tRNA(Sec) biosynthesis; L-seryl-tRNA(Sec) from L-serine and tRNA(Sec): step 1/1.</text>
</comment>
<comment type="subunit">
    <text evidence="1">Homodimer. The tRNA molecule binds across the dimer.</text>
</comment>
<comment type="subcellular location">
    <subcellularLocation>
        <location evidence="1">Cytoplasm</location>
    </subcellularLocation>
</comment>
<comment type="domain">
    <text evidence="1">Consists of two distinct domains, a catalytic core and a N-terminal extension that is involved in tRNA binding.</text>
</comment>
<comment type="similarity">
    <text evidence="1">Belongs to the class-II aminoacyl-tRNA synthetase family. Type-1 seryl-tRNA synthetase subfamily.</text>
</comment>
<name>SYS_RICRO</name>
<gene>
    <name evidence="1" type="primary">serS</name>
    <name type="ordered locus">RrIowa_1425</name>
</gene>
<evidence type="ECO:0000255" key="1">
    <source>
        <dbReference type="HAMAP-Rule" id="MF_00176"/>
    </source>
</evidence>
<accession>B0BV96</accession>
<sequence length="425" mass="48399">MLNIKWIRENKELFDEKLSQRFIEPMSSKIAMLDGEKRKITSLIQELQHARKVKSKILGNMASKSGEEFEGLQRDVKHINEKLEALEHDLNNNNELNELLNMFPNIPDEEVPYGMDASMNKLVRTYGETNPNALNKQHFELGIKLNLMDFEQTAKISGTKFVTLKGDLAKLERALINFMIDVHTKEWDFFEISPPVLVRDNAMYNAGQLPKFAEESFATTNGYRLIPTAEVSLVNMVADTIIPREKLPIRYVAYTQCFRSEAGSSGRDTRGMIRLHQFGKVELVSITTPEESTNEHEYITNASETILQKLNLPYRVMLLCTGDMGFAAKKTYDIEVWLPGQKQYREIASCSNCGDFQARRMKARYKEFGSNETTLVHTLNASGLPIGRTMVAILENYQNEDGSITIPDVLINYMGGLQKIIAYSE</sequence>